<organism>
    <name type="scientific">Bacteroides fragilis (strain YCH46)</name>
    <dbReference type="NCBI Taxonomy" id="295405"/>
    <lineage>
        <taxon>Bacteria</taxon>
        <taxon>Pseudomonadati</taxon>
        <taxon>Bacteroidota</taxon>
        <taxon>Bacteroidia</taxon>
        <taxon>Bacteroidales</taxon>
        <taxon>Bacteroidaceae</taxon>
        <taxon>Bacteroides</taxon>
    </lineage>
</organism>
<reference key="1">
    <citation type="journal article" date="2004" name="Proc. Natl. Acad. Sci. U.S.A.">
        <title>Genomic analysis of Bacteroides fragilis reveals extensive DNA inversions regulating cell surface adaptation.</title>
        <authorList>
            <person name="Kuwahara T."/>
            <person name="Yamashita A."/>
            <person name="Hirakawa H."/>
            <person name="Nakayama H."/>
            <person name="Toh H."/>
            <person name="Okada N."/>
            <person name="Kuhara S."/>
            <person name="Hattori M."/>
            <person name="Hayashi T."/>
            <person name="Ohnishi Y."/>
        </authorList>
    </citation>
    <scope>NUCLEOTIDE SEQUENCE [LARGE SCALE GENOMIC DNA]</scope>
    <source>
        <strain>YCH46</strain>
    </source>
</reference>
<dbReference type="EC" id="2.4.1.227" evidence="1"/>
<dbReference type="EMBL" id="AP006841">
    <property type="protein sequence ID" value="BAD47055.1"/>
    <property type="molecule type" value="Genomic_DNA"/>
</dbReference>
<dbReference type="RefSeq" id="WP_005784003.1">
    <property type="nucleotide sequence ID" value="NZ_UYXF01000014.1"/>
</dbReference>
<dbReference type="RefSeq" id="YP_097589.1">
    <property type="nucleotide sequence ID" value="NC_006347.1"/>
</dbReference>
<dbReference type="SMR" id="Q64ZM1"/>
<dbReference type="STRING" id="295405.BF0306"/>
<dbReference type="CAZy" id="GT28">
    <property type="family name" value="Glycosyltransferase Family 28"/>
</dbReference>
<dbReference type="GeneID" id="60368720"/>
<dbReference type="KEGG" id="bfr:BF0306"/>
<dbReference type="PATRIC" id="fig|295405.11.peg.329"/>
<dbReference type="HOGENOM" id="CLU_037404_0_1_10"/>
<dbReference type="OrthoDB" id="9808936at2"/>
<dbReference type="UniPathway" id="UPA00219"/>
<dbReference type="Proteomes" id="UP000002197">
    <property type="component" value="Chromosome"/>
</dbReference>
<dbReference type="GO" id="GO:0005886">
    <property type="term" value="C:plasma membrane"/>
    <property type="evidence" value="ECO:0007669"/>
    <property type="project" value="UniProtKB-SubCell"/>
</dbReference>
<dbReference type="GO" id="GO:0051991">
    <property type="term" value="F:UDP-N-acetyl-D-glucosamine:N-acetylmuramoyl-L-alanyl-D-glutamyl-meso-2,6-diaminopimelyl-D-alanyl-D-alanine-diphosphoundecaprenol 4-beta-N-acetylglucosaminlytransferase activity"/>
    <property type="evidence" value="ECO:0007669"/>
    <property type="project" value="RHEA"/>
</dbReference>
<dbReference type="GO" id="GO:0050511">
    <property type="term" value="F:undecaprenyldiphospho-muramoylpentapeptide beta-N-acetylglucosaminyltransferase activity"/>
    <property type="evidence" value="ECO:0007669"/>
    <property type="project" value="UniProtKB-UniRule"/>
</dbReference>
<dbReference type="GO" id="GO:0005975">
    <property type="term" value="P:carbohydrate metabolic process"/>
    <property type="evidence" value="ECO:0007669"/>
    <property type="project" value="InterPro"/>
</dbReference>
<dbReference type="GO" id="GO:0051301">
    <property type="term" value="P:cell division"/>
    <property type="evidence" value="ECO:0007669"/>
    <property type="project" value="UniProtKB-KW"/>
</dbReference>
<dbReference type="GO" id="GO:0071555">
    <property type="term" value="P:cell wall organization"/>
    <property type="evidence" value="ECO:0007669"/>
    <property type="project" value="UniProtKB-KW"/>
</dbReference>
<dbReference type="GO" id="GO:0030259">
    <property type="term" value="P:lipid glycosylation"/>
    <property type="evidence" value="ECO:0007669"/>
    <property type="project" value="UniProtKB-UniRule"/>
</dbReference>
<dbReference type="GO" id="GO:0009252">
    <property type="term" value="P:peptidoglycan biosynthetic process"/>
    <property type="evidence" value="ECO:0007669"/>
    <property type="project" value="UniProtKB-UniRule"/>
</dbReference>
<dbReference type="GO" id="GO:0008360">
    <property type="term" value="P:regulation of cell shape"/>
    <property type="evidence" value="ECO:0007669"/>
    <property type="project" value="UniProtKB-KW"/>
</dbReference>
<dbReference type="CDD" id="cd03785">
    <property type="entry name" value="GT28_MurG"/>
    <property type="match status" value="1"/>
</dbReference>
<dbReference type="Gene3D" id="3.40.50.2000">
    <property type="entry name" value="Glycogen Phosphorylase B"/>
    <property type="match status" value="2"/>
</dbReference>
<dbReference type="HAMAP" id="MF_00033">
    <property type="entry name" value="MurG"/>
    <property type="match status" value="1"/>
</dbReference>
<dbReference type="InterPro" id="IPR006009">
    <property type="entry name" value="GlcNAc_MurG"/>
</dbReference>
<dbReference type="InterPro" id="IPR007235">
    <property type="entry name" value="Glyco_trans_28_C"/>
</dbReference>
<dbReference type="InterPro" id="IPR004276">
    <property type="entry name" value="GlycoTrans_28_N"/>
</dbReference>
<dbReference type="NCBIfam" id="TIGR01133">
    <property type="entry name" value="murG"/>
    <property type="match status" value="1"/>
</dbReference>
<dbReference type="PANTHER" id="PTHR21015:SF22">
    <property type="entry name" value="GLYCOSYLTRANSFERASE"/>
    <property type="match status" value="1"/>
</dbReference>
<dbReference type="PANTHER" id="PTHR21015">
    <property type="entry name" value="UDP-N-ACETYLGLUCOSAMINE--N-ACETYLMURAMYL-(PENTAPEPTIDE) PYROPHOSPHORYL-UNDECAPRENOL N-ACETYLGLUCOSAMINE TRANSFERASE 1"/>
    <property type="match status" value="1"/>
</dbReference>
<dbReference type="Pfam" id="PF04101">
    <property type="entry name" value="Glyco_tran_28_C"/>
    <property type="match status" value="1"/>
</dbReference>
<dbReference type="Pfam" id="PF03033">
    <property type="entry name" value="Glyco_transf_28"/>
    <property type="match status" value="1"/>
</dbReference>
<dbReference type="SUPFAM" id="SSF53756">
    <property type="entry name" value="UDP-Glycosyltransferase/glycogen phosphorylase"/>
    <property type="match status" value="1"/>
</dbReference>
<accession>Q64ZM1</accession>
<proteinExistence type="inferred from homology"/>
<evidence type="ECO:0000255" key="1">
    <source>
        <dbReference type="HAMAP-Rule" id="MF_00033"/>
    </source>
</evidence>
<keyword id="KW-0131">Cell cycle</keyword>
<keyword id="KW-0132">Cell division</keyword>
<keyword id="KW-0997">Cell inner membrane</keyword>
<keyword id="KW-1003">Cell membrane</keyword>
<keyword id="KW-0133">Cell shape</keyword>
<keyword id="KW-0961">Cell wall biogenesis/degradation</keyword>
<keyword id="KW-0328">Glycosyltransferase</keyword>
<keyword id="KW-0472">Membrane</keyword>
<keyword id="KW-0573">Peptidoglycan synthesis</keyword>
<keyword id="KW-0808">Transferase</keyword>
<name>MURG_BACFR</name>
<protein>
    <recommendedName>
        <fullName evidence="1">UDP-N-acetylglucosamine--N-acetylmuramyl-(pentapeptide) pyrophosphoryl-undecaprenol N-acetylglucosamine transferase</fullName>
        <ecNumber evidence="1">2.4.1.227</ecNumber>
    </recommendedName>
    <alternativeName>
        <fullName evidence="1">Undecaprenyl-PP-MurNAc-pentapeptide-UDPGlcNAc GlcNAc transferase</fullName>
    </alternativeName>
</protein>
<feature type="chain" id="PRO_0000225029" description="UDP-N-acetylglucosamine--N-acetylmuramyl-(pentapeptide) pyrophosphoryl-undecaprenol N-acetylglucosamine transferase">
    <location>
        <begin position="1"/>
        <end position="380"/>
    </location>
</feature>
<feature type="binding site" evidence="1">
    <location>
        <begin position="23"/>
        <end position="25"/>
    </location>
    <ligand>
        <name>UDP-N-acetyl-alpha-D-glucosamine</name>
        <dbReference type="ChEBI" id="CHEBI:57705"/>
    </ligand>
</feature>
<feature type="binding site" evidence="1">
    <location>
        <position position="137"/>
    </location>
    <ligand>
        <name>UDP-N-acetyl-alpha-D-glucosamine</name>
        <dbReference type="ChEBI" id="CHEBI:57705"/>
    </ligand>
</feature>
<feature type="binding site" evidence="1">
    <location>
        <position position="178"/>
    </location>
    <ligand>
        <name>UDP-N-acetyl-alpha-D-glucosamine</name>
        <dbReference type="ChEBI" id="CHEBI:57705"/>
    </ligand>
</feature>
<feature type="binding site" evidence="1">
    <location>
        <position position="210"/>
    </location>
    <ligand>
        <name>UDP-N-acetyl-alpha-D-glucosamine</name>
        <dbReference type="ChEBI" id="CHEBI:57705"/>
    </ligand>
</feature>
<feature type="binding site" evidence="1">
    <location>
        <position position="266"/>
    </location>
    <ligand>
        <name>UDP-N-acetyl-alpha-D-glucosamine</name>
        <dbReference type="ChEBI" id="CHEBI:57705"/>
    </ligand>
</feature>
<feature type="binding site" evidence="1">
    <location>
        <position position="311"/>
    </location>
    <ligand>
        <name>UDP-N-acetyl-alpha-D-glucosamine</name>
        <dbReference type="ChEBI" id="CHEBI:57705"/>
    </ligand>
</feature>
<sequence>MNKENNKEGQGDALRVIISGGGTGGHIFPAVSIANAIKELRPDAQILFVGAEGRMEMQRVPDAGYQIIGLPVAGFDRKHLWKNVAVLLKLVRSQWKARNIIRQFRPQVAVGVGGYASGPTLKMAGMMGVPTLIQEQNSYAGVTNKLLAQKARRICVAYDGMEKFFPANKIIMTGNPVRQNLLAEKPEREQAIRSFGLNPEKKTILILGGSLGARTINNTLIAGLQLIRRTTDVQFIWQTGKIYHQQVTEAVKAAGEIPNLFVTDFIKDMAAAYAAADLVISRAGAGSISEFCLLNKPVILVPSPNVAEDHQTKNALALVNKQAAIYVKDAEAENKLLPVALETIANAEKLSELSENIAHLALPDSAVVIAKEVIKLAQQS</sequence>
<comment type="function">
    <text evidence="1">Cell wall formation. Catalyzes the transfer of a GlcNAc subunit on undecaprenyl-pyrophosphoryl-MurNAc-pentapeptide (lipid intermediate I) to form undecaprenyl-pyrophosphoryl-MurNAc-(pentapeptide)GlcNAc (lipid intermediate II).</text>
</comment>
<comment type="catalytic activity">
    <reaction evidence="1">
        <text>di-trans,octa-cis-undecaprenyl diphospho-N-acetyl-alpha-D-muramoyl-L-alanyl-D-glutamyl-meso-2,6-diaminopimeloyl-D-alanyl-D-alanine + UDP-N-acetyl-alpha-D-glucosamine = di-trans,octa-cis-undecaprenyl diphospho-[N-acetyl-alpha-D-glucosaminyl-(1-&gt;4)]-N-acetyl-alpha-D-muramoyl-L-alanyl-D-glutamyl-meso-2,6-diaminopimeloyl-D-alanyl-D-alanine + UDP + H(+)</text>
        <dbReference type="Rhea" id="RHEA:31227"/>
        <dbReference type="ChEBI" id="CHEBI:15378"/>
        <dbReference type="ChEBI" id="CHEBI:57705"/>
        <dbReference type="ChEBI" id="CHEBI:58223"/>
        <dbReference type="ChEBI" id="CHEBI:61387"/>
        <dbReference type="ChEBI" id="CHEBI:61388"/>
        <dbReference type="EC" id="2.4.1.227"/>
    </reaction>
</comment>
<comment type="pathway">
    <text evidence="1">Cell wall biogenesis; peptidoglycan biosynthesis.</text>
</comment>
<comment type="subcellular location">
    <subcellularLocation>
        <location evidence="1">Cell inner membrane</location>
        <topology evidence="1">Peripheral membrane protein</topology>
        <orientation evidence="1">Cytoplasmic side</orientation>
    </subcellularLocation>
</comment>
<comment type="similarity">
    <text evidence="1">Belongs to the glycosyltransferase 28 family. MurG subfamily.</text>
</comment>
<gene>
    <name evidence="1" type="primary">murG</name>
    <name type="ordered locus">BF0306</name>
</gene>